<name>SYS_RHOPA</name>
<comment type="function">
    <text evidence="1">Catalyzes the attachment of serine to tRNA(Ser). Is also able to aminoacylate tRNA(Sec) with serine, to form the misacylated tRNA L-seryl-tRNA(Sec), which will be further converted into selenocysteinyl-tRNA(Sec).</text>
</comment>
<comment type="catalytic activity">
    <reaction evidence="1">
        <text>tRNA(Ser) + L-serine + ATP = L-seryl-tRNA(Ser) + AMP + diphosphate + H(+)</text>
        <dbReference type="Rhea" id="RHEA:12292"/>
        <dbReference type="Rhea" id="RHEA-COMP:9669"/>
        <dbReference type="Rhea" id="RHEA-COMP:9703"/>
        <dbReference type="ChEBI" id="CHEBI:15378"/>
        <dbReference type="ChEBI" id="CHEBI:30616"/>
        <dbReference type="ChEBI" id="CHEBI:33019"/>
        <dbReference type="ChEBI" id="CHEBI:33384"/>
        <dbReference type="ChEBI" id="CHEBI:78442"/>
        <dbReference type="ChEBI" id="CHEBI:78533"/>
        <dbReference type="ChEBI" id="CHEBI:456215"/>
        <dbReference type="EC" id="6.1.1.11"/>
    </reaction>
</comment>
<comment type="catalytic activity">
    <reaction evidence="1">
        <text>tRNA(Sec) + L-serine + ATP = L-seryl-tRNA(Sec) + AMP + diphosphate + H(+)</text>
        <dbReference type="Rhea" id="RHEA:42580"/>
        <dbReference type="Rhea" id="RHEA-COMP:9742"/>
        <dbReference type="Rhea" id="RHEA-COMP:10128"/>
        <dbReference type="ChEBI" id="CHEBI:15378"/>
        <dbReference type="ChEBI" id="CHEBI:30616"/>
        <dbReference type="ChEBI" id="CHEBI:33019"/>
        <dbReference type="ChEBI" id="CHEBI:33384"/>
        <dbReference type="ChEBI" id="CHEBI:78442"/>
        <dbReference type="ChEBI" id="CHEBI:78533"/>
        <dbReference type="ChEBI" id="CHEBI:456215"/>
        <dbReference type="EC" id="6.1.1.11"/>
    </reaction>
</comment>
<comment type="pathway">
    <text evidence="1">Aminoacyl-tRNA biosynthesis; selenocysteinyl-tRNA(Sec) biosynthesis; L-seryl-tRNA(Sec) from L-serine and tRNA(Sec): step 1/1.</text>
</comment>
<comment type="subunit">
    <text evidence="1">Homodimer. The tRNA molecule binds across the dimer.</text>
</comment>
<comment type="subcellular location">
    <subcellularLocation>
        <location evidence="1">Cytoplasm</location>
    </subcellularLocation>
</comment>
<comment type="domain">
    <text evidence="1">Consists of two distinct domains, a catalytic core and a N-terminal extension that is involved in tRNA binding.</text>
</comment>
<comment type="similarity">
    <text evidence="1">Belongs to the class-II aminoacyl-tRNA synthetase family. Type-1 seryl-tRNA synthetase subfamily.</text>
</comment>
<reference key="1">
    <citation type="journal article" date="2004" name="Nat. Biotechnol.">
        <title>Complete genome sequence of the metabolically versatile photosynthetic bacterium Rhodopseudomonas palustris.</title>
        <authorList>
            <person name="Larimer F.W."/>
            <person name="Chain P."/>
            <person name="Hauser L."/>
            <person name="Lamerdin J.E."/>
            <person name="Malfatti S."/>
            <person name="Do L."/>
            <person name="Land M.L."/>
            <person name="Pelletier D.A."/>
            <person name="Beatty J.T."/>
            <person name="Lang A.S."/>
            <person name="Tabita F.R."/>
            <person name="Gibson J.L."/>
            <person name="Hanson T.E."/>
            <person name="Bobst C."/>
            <person name="Torres y Torres J.L."/>
            <person name="Peres C."/>
            <person name="Harrison F.H."/>
            <person name="Gibson J."/>
            <person name="Harwood C.S."/>
        </authorList>
    </citation>
    <scope>NUCLEOTIDE SEQUENCE [LARGE SCALE GENOMIC DNA]</scope>
    <source>
        <strain>ATCC BAA-98 / CGA009</strain>
    </source>
</reference>
<sequence>MHDIKAIRDNPQAFDAAFTRRGLAPIAGSLMKLDEVRRAAVQAAEQAQARRNAASKEIGDAKKAKDNARAEALMAEVTELKTTMPALDAAVKEADEALKKALSEIPNLPLPEVPEGADEHGNVEHHRFGEKPSYSFTPKPHYDLGEALGMMDFEAAAKLSGARFTVLKKGLARLERAIGQFFLDVHTGDHGYTEVNPPLLVKDDAMFGTAQLPKFREDQFAAGAIGSGGEGYWLIPTAEVSLTNLVRESILDEKELPMRLTALTPCFRAEAGAAGRDTRGMIRQHQFTKVELVSITTPEQSKDEHERMLSCAEEVLRRLGLHYRVMTLCTGDMGFASQKTYDIEVWMPGQGEGGAYREISSCSVCGDFQARRMDARSRGSDGKPRFVHTLNGSGTAVGRALIAVIENYQQEDGSIAVPDVLQPYMGGLKVIAKA</sequence>
<evidence type="ECO:0000255" key="1">
    <source>
        <dbReference type="HAMAP-Rule" id="MF_00176"/>
    </source>
</evidence>
<proteinExistence type="inferred from homology"/>
<accession>Q6N5X5</accession>
<gene>
    <name evidence="1" type="primary">serS</name>
    <name type="ordered locus">RPA2845</name>
</gene>
<keyword id="KW-0030">Aminoacyl-tRNA synthetase</keyword>
<keyword id="KW-0067">ATP-binding</keyword>
<keyword id="KW-0963">Cytoplasm</keyword>
<keyword id="KW-0436">Ligase</keyword>
<keyword id="KW-0547">Nucleotide-binding</keyword>
<keyword id="KW-0648">Protein biosynthesis</keyword>
<organism>
    <name type="scientific">Rhodopseudomonas palustris (strain ATCC BAA-98 / CGA009)</name>
    <dbReference type="NCBI Taxonomy" id="258594"/>
    <lineage>
        <taxon>Bacteria</taxon>
        <taxon>Pseudomonadati</taxon>
        <taxon>Pseudomonadota</taxon>
        <taxon>Alphaproteobacteria</taxon>
        <taxon>Hyphomicrobiales</taxon>
        <taxon>Nitrobacteraceae</taxon>
        <taxon>Rhodopseudomonas</taxon>
    </lineage>
</organism>
<dbReference type="EC" id="6.1.1.11" evidence="1"/>
<dbReference type="EMBL" id="BX572602">
    <property type="protein sequence ID" value="CAE28286.1"/>
    <property type="molecule type" value="Genomic_DNA"/>
</dbReference>
<dbReference type="RefSeq" id="WP_011158394.1">
    <property type="nucleotide sequence ID" value="NZ_CP116810.1"/>
</dbReference>
<dbReference type="SMR" id="Q6N5X5"/>
<dbReference type="STRING" id="258594.RPA2845"/>
<dbReference type="GeneID" id="66893923"/>
<dbReference type="eggNOG" id="COG0172">
    <property type="taxonomic scope" value="Bacteria"/>
</dbReference>
<dbReference type="HOGENOM" id="CLU_023797_1_1_5"/>
<dbReference type="PhylomeDB" id="Q6N5X5"/>
<dbReference type="UniPathway" id="UPA00906">
    <property type="reaction ID" value="UER00895"/>
</dbReference>
<dbReference type="GO" id="GO:0005737">
    <property type="term" value="C:cytoplasm"/>
    <property type="evidence" value="ECO:0007669"/>
    <property type="project" value="UniProtKB-SubCell"/>
</dbReference>
<dbReference type="GO" id="GO:0005524">
    <property type="term" value="F:ATP binding"/>
    <property type="evidence" value="ECO:0007669"/>
    <property type="project" value="UniProtKB-UniRule"/>
</dbReference>
<dbReference type="GO" id="GO:0004828">
    <property type="term" value="F:serine-tRNA ligase activity"/>
    <property type="evidence" value="ECO:0007669"/>
    <property type="project" value="UniProtKB-UniRule"/>
</dbReference>
<dbReference type="GO" id="GO:0016260">
    <property type="term" value="P:selenocysteine biosynthetic process"/>
    <property type="evidence" value="ECO:0007669"/>
    <property type="project" value="UniProtKB-UniRule"/>
</dbReference>
<dbReference type="GO" id="GO:0006434">
    <property type="term" value="P:seryl-tRNA aminoacylation"/>
    <property type="evidence" value="ECO:0007669"/>
    <property type="project" value="UniProtKB-UniRule"/>
</dbReference>
<dbReference type="CDD" id="cd00770">
    <property type="entry name" value="SerRS_core"/>
    <property type="match status" value="1"/>
</dbReference>
<dbReference type="Gene3D" id="3.30.930.10">
    <property type="entry name" value="Bira Bifunctional Protein, Domain 2"/>
    <property type="match status" value="1"/>
</dbReference>
<dbReference type="Gene3D" id="1.10.287.40">
    <property type="entry name" value="Serine-tRNA synthetase, tRNA binding domain"/>
    <property type="match status" value="1"/>
</dbReference>
<dbReference type="HAMAP" id="MF_00176">
    <property type="entry name" value="Ser_tRNA_synth_type1"/>
    <property type="match status" value="1"/>
</dbReference>
<dbReference type="InterPro" id="IPR002314">
    <property type="entry name" value="aa-tRNA-synt_IIb"/>
</dbReference>
<dbReference type="InterPro" id="IPR006195">
    <property type="entry name" value="aa-tRNA-synth_II"/>
</dbReference>
<dbReference type="InterPro" id="IPR045864">
    <property type="entry name" value="aa-tRNA-synth_II/BPL/LPL"/>
</dbReference>
<dbReference type="InterPro" id="IPR002317">
    <property type="entry name" value="Ser-tRNA-ligase_type_1"/>
</dbReference>
<dbReference type="InterPro" id="IPR015866">
    <property type="entry name" value="Ser-tRNA-synth_1_N"/>
</dbReference>
<dbReference type="InterPro" id="IPR042103">
    <property type="entry name" value="SerRS_1_N_sf"/>
</dbReference>
<dbReference type="InterPro" id="IPR033729">
    <property type="entry name" value="SerRS_core"/>
</dbReference>
<dbReference type="InterPro" id="IPR010978">
    <property type="entry name" value="tRNA-bd_arm"/>
</dbReference>
<dbReference type="NCBIfam" id="TIGR00414">
    <property type="entry name" value="serS"/>
    <property type="match status" value="1"/>
</dbReference>
<dbReference type="PANTHER" id="PTHR43697:SF1">
    <property type="entry name" value="SERINE--TRNA LIGASE"/>
    <property type="match status" value="1"/>
</dbReference>
<dbReference type="PANTHER" id="PTHR43697">
    <property type="entry name" value="SERYL-TRNA SYNTHETASE"/>
    <property type="match status" value="1"/>
</dbReference>
<dbReference type="Pfam" id="PF02403">
    <property type="entry name" value="Seryl_tRNA_N"/>
    <property type="match status" value="1"/>
</dbReference>
<dbReference type="Pfam" id="PF00587">
    <property type="entry name" value="tRNA-synt_2b"/>
    <property type="match status" value="1"/>
</dbReference>
<dbReference type="PIRSF" id="PIRSF001529">
    <property type="entry name" value="Ser-tRNA-synth_IIa"/>
    <property type="match status" value="1"/>
</dbReference>
<dbReference type="PRINTS" id="PR00981">
    <property type="entry name" value="TRNASYNTHSER"/>
</dbReference>
<dbReference type="SUPFAM" id="SSF55681">
    <property type="entry name" value="Class II aaRS and biotin synthetases"/>
    <property type="match status" value="1"/>
</dbReference>
<dbReference type="SUPFAM" id="SSF46589">
    <property type="entry name" value="tRNA-binding arm"/>
    <property type="match status" value="1"/>
</dbReference>
<dbReference type="PROSITE" id="PS50862">
    <property type="entry name" value="AA_TRNA_LIGASE_II"/>
    <property type="match status" value="1"/>
</dbReference>
<protein>
    <recommendedName>
        <fullName evidence="1">Serine--tRNA ligase</fullName>
        <ecNumber evidence="1">6.1.1.11</ecNumber>
    </recommendedName>
    <alternativeName>
        <fullName evidence="1">Seryl-tRNA synthetase</fullName>
        <shortName evidence="1">SerRS</shortName>
    </alternativeName>
    <alternativeName>
        <fullName evidence="1">Seryl-tRNA(Ser/Sec) synthetase</fullName>
    </alternativeName>
</protein>
<feature type="chain" id="PRO_0000122108" description="Serine--tRNA ligase">
    <location>
        <begin position="1"/>
        <end position="434"/>
    </location>
</feature>
<feature type="binding site" evidence="1">
    <location>
        <begin position="237"/>
        <end position="239"/>
    </location>
    <ligand>
        <name>L-serine</name>
        <dbReference type="ChEBI" id="CHEBI:33384"/>
    </ligand>
</feature>
<feature type="binding site" evidence="1">
    <location>
        <begin position="268"/>
        <end position="270"/>
    </location>
    <ligand>
        <name>ATP</name>
        <dbReference type="ChEBI" id="CHEBI:30616"/>
    </ligand>
</feature>
<feature type="binding site" evidence="1">
    <location>
        <position position="291"/>
    </location>
    <ligand>
        <name>L-serine</name>
        <dbReference type="ChEBI" id="CHEBI:33384"/>
    </ligand>
</feature>
<feature type="binding site" evidence="1">
    <location>
        <begin position="358"/>
        <end position="361"/>
    </location>
    <ligand>
        <name>ATP</name>
        <dbReference type="ChEBI" id="CHEBI:30616"/>
    </ligand>
</feature>
<feature type="binding site" evidence="1">
    <location>
        <position position="393"/>
    </location>
    <ligand>
        <name>L-serine</name>
        <dbReference type="ChEBI" id="CHEBI:33384"/>
    </ligand>
</feature>